<feature type="chain" id="PRO_0000071795" description="Protein CASP">
    <location>
        <begin position="1"/>
        <end position="679"/>
    </location>
</feature>
<feature type="topological domain" description="Cytoplasmic" evidence="1">
    <location>
        <begin position="1"/>
        <end position="614"/>
    </location>
</feature>
<feature type="transmembrane region" description="Helical; Anchor for type IV membrane protein" evidence="1">
    <location>
        <begin position="615"/>
        <end position="635"/>
    </location>
</feature>
<feature type="topological domain" description="Lumenal" evidence="1">
    <location>
        <begin position="636"/>
        <end position="679"/>
    </location>
</feature>
<feature type="coiled-coil region" evidence="1">
    <location>
        <begin position="14"/>
        <end position="90"/>
    </location>
</feature>
<feature type="coiled-coil region" evidence="1">
    <location>
        <begin position="178"/>
        <end position="341"/>
    </location>
</feature>
<feature type="coiled-coil region" evidence="1">
    <location>
        <begin position="385"/>
        <end position="444"/>
    </location>
</feature>
<feature type="coiled-coil region" evidence="1">
    <location>
        <begin position="492"/>
        <end position="540"/>
    </location>
</feature>
<feature type="modified residue" description="Phosphoserine" evidence="5 6 7">
    <location>
        <position position="364"/>
    </location>
</feature>
<feature type="modified residue" description="Phosphoserine" evidence="6 7">
    <location>
        <position position="450"/>
    </location>
</feature>
<feature type="modified residue" description="Phosphoserine" evidence="7">
    <location>
        <position position="453"/>
    </location>
</feature>
<feature type="modified residue" description="Phosphoserine" evidence="7">
    <location>
        <position position="555"/>
    </location>
</feature>
<feature type="mutagenesis site" description="Retained in the endoplasmic reticulum." evidence="2">
    <original>Y</original>
    <variation>L</variation>
    <location>
        <position position="619"/>
    </location>
</feature>
<feature type="mutagenesis site" description="No effect on subcellular location." evidence="2">
    <original>H</original>
    <variation>L</variation>
    <location>
        <position position="624"/>
    </location>
</feature>
<comment type="function">
    <text evidence="2">May be involved in intra-Golgi transport.</text>
</comment>
<comment type="subcellular location">
    <subcellularLocation>
        <location evidence="2">Golgi apparatus membrane</location>
        <topology evidence="2">Single-pass type IV membrane protein</topology>
    </subcellularLocation>
</comment>
<comment type="miscellaneous">
    <text evidence="3">Present with 2650 molecules/cell in log phase SD medium.</text>
</comment>
<comment type="similarity">
    <text evidence="4">Belongs to the CASP family.</text>
</comment>
<reference key="1">
    <citation type="journal article" date="1993" name="Yeast">
        <title>Sequencing and analysis of 51.6 kilobases on the left arm of chromosome XI from Saccharomyces cerevisiae reveals 23 open reading frames including the FAS1 gene.</title>
        <authorList>
            <person name="Wiemann S."/>
            <person name="Voss H."/>
            <person name="Schwager C."/>
            <person name="Rupp T."/>
            <person name="Stegemann J."/>
            <person name="Zimmermann J."/>
            <person name="Grothues D."/>
            <person name="Sensen C."/>
            <person name="Erfle H."/>
            <person name="Hewitt N."/>
            <person name="Banrevi A."/>
            <person name="Ansorge W."/>
        </authorList>
    </citation>
    <scope>NUCLEOTIDE SEQUENCE [GENOMIC DNA]</scope>
</reference>
<reference key="2">
    <citation type="journal article" date="1994" name="Nature">
        <title>Complete DNA sequence of yeast chromosome XI.</title>
        <authorList>
            <person name="Dujon B."/>
            <person name="Alexandraki D."/>
            <person name="Andre B."/>
            <person name="Ansorge W."/>
            <person name="Baladron V."/>
            <person name="Ballesta J.P.G."/>
            <person name="Banrevi A."/>
            <person name="Bolle P.-A."/>
            <person name="Bolotin-Fukuhara M."/>
            <person name="Bossier P."/>
            <person name="Bou G."/>
            <person name="Boyer J."/>
            <person name="Buitrago M.J."/>
            <person name="Cheret G."/>
            <person name="Colleaux L."/>
            <person name="Daignan-Fornier B."/>
            <person name="del Rey F."/>
            <person name="Dion C."/>
            <person name="Domdey H."/>
            <person name="Duesterhoeft A."/>
            <person name="Duesterhus S."/>
            <person name="Entian K.-D."/>
            <person name="Erfle H."/>
            <person name="Esteban P.F."/>
            <person name="Feldmann H."/>
            <person name="Fernandes L."/>
            <person name="Fobo G.M."/>
            <person name="Fritz C."/>
            <person name="Fukuhara H."/>
            <person name="Gabel C."/>
            <person name="Gaillon L."/>
            <person name="Garcia-Cantalejo J.M."/>
            <person name="Garcia-Ramirez J.J."/>
            <person name="Gent M.E."/>
            <person name="Ghazvini M."/>
            <person name="Goffeau A."/>
            <person name="Gonzalez A."/>
            <person name="Grothues D."/>
            <person name="Guerreiro P."/>
            <person name="Hegemann J.H."/>
            <person name="Hewitt N."/>
            <person name="Hilger F."/>
            <person name="Hollenberg C.P."/>
            <person name="Horaitis O."/>
            <person name="Indge K.J."/>
            <person name="Jacquier A."/>
            <person name="James C.M."/>
            <person name="Jauniaux J.-C."/>
            <person name="Jimenez A."/>
            <person name="Keuchel H."/>
            <person name="Kirchrath L."/>
            <person name="Kleine K."/>
            <person name="Koetter P."/>
            <person name="Legrain P."/>
            <person name="Liebl S."/>
            <person name="Louis E.J."/>
            <person name="Maia e Silva A."/>
            <person name="Marck C."/>
            <person name="Monnier A.-L."/>
            <person name="Moestl D."/>
            <person name="Mueller S."/>
            <person name="Obermaier B."/>
            <person name="Oliver S.G."/>
            <person name="Pallier C."/>
            <person name="Pascolo S."/>
            <person name="Pfeiffer F."/>
            <person name="Philippsen P."/>
            <person name="Planta R.J."/>
            <person name="Pohl F.M."/>
            <person name="Pohl T.M."/>
            <person name="Poehlmann R."/>
            <person name="Portetelle D."/>
            <person name="Purnelle B."/>
            <person name="Puzos V."/>
            <person name="Ramezani Rad M."/>
            <person name="Rasmussen S.W."/>
            <person name="Remacha M.A."/>
            <person name="Revuelta J.L."/>
            <person name="Richard G.-F."/>
            <person name="Rieger M."/>
            <person name="Rodrigues-Pousada C."/>
            <person name="Rose M."/>
            <person name="Rupp T."/>
            <person name="Santos M.A."/>
            <person name="Schwager C."/>
            <person name="Sensen C."/>
            <person name="Skala J."/>
            <person name="Soares H."/>
            <person name="Sor F."/>
            <person name="Stegemann J."/>
            <person name="Tettelin H."/>
            <person name="Thierry A."/>
            <person name="Tzermia M."/>
            <person name="Urrestarazu L.A."/>
            <person name="van Dyck L."/>
            <person name="van Vliet-Reedijk J.C."/>
            <person name="Valens M."/>
            <person name="Vandenbol M."/>
            <person name="Vilela C."/>
            <person name="Vissers S."/>
            <person name="von Wettstein D."/>
            <person name="Voss H."/>
            <person name="Wiemann S."/>
            <person name="Xu G."/>
            <person name="Zimmermann J."/>
            <person name="Haasemann M."/>
            <person name="Becker I."/>
            <person name="Mewes H.-W."/>
        </authorList>
    </citation>
    <scope>NUCLEOTIDE SEQUENCE [LARGE SCALE GENOMIC DNA]</scope>
    <source>
        <strain>ATCC 204508 / S288c</strain>
    </source>
</reference>
<reference key="3">
    <citation type="journal article" date="2014" name="G3 (Bethesda)">
        <title>The reference genome sequence of Saccharomyces cerevisiae: Then and now.</title>
        <authorList>
            <person name="Engel S.R."/>
            <person name="Dietrich F.S."/>
            <person name="Fisk D.G."/>
            <person name="Binkley G."/>
            <person name="Balakrishnan R."/>
            <person name="Costanzo M.C."/>
            <person name="Dwight S.S."/>
            <person name="Hitz B.C."/>
            <person name="Karra K."/>
            <person name="Nash R.S."/>
            <person name="Weng S."/>
            <person name="Wong E.D."/>
            <person name="Lloyd P."/>
            <person name="Skrzypek M.S."/>
            <person name="Miyasato S.R."/>
            <person name="Simison M."/>
            <person name="Cherry J.M."/>
        </authorList>
    </citation>
    <scope>GENOME REANNOTATION</scope>
    <source>
        <strain>ATCC 204508 / S288c</strain>
    </source>
</reference>
<reference key="4">
    <citation type="journal article" date="1997" name="Gene">
        <title>CASP, a novel, highly conserved alternative-splicing product of the CDP/cut/cux gene, lacks cut-repeat and homeo DNA-binding domains, and interacts with full-length CDP in vitro.</title>
        <authorList>
            <person name="Lievens P.M.-J."/>
            <person name="Tufarelli C."/>
            <person name="Donady J.J."/>
            <person name="Stagg A."/>
            <person name="Neufeld E.J."/>
        </authorList>
    </citation>
    <scope>IDENTIFICATION</scope>
</reference>
<reference key="5">
    <citation type="journal article" date="2002" name="Mol. Biol. Cell">
        <title>CASP, the alternatively spliced product of the gene encoding the CCAAT-displacement protein transcription factor, is a Golgi membrane protein related to giantin.</title>
        <authorList>
            <person name="Gillingham A.K."/>
            <person name="Pfeifer A.C."/>
            <person name="Munro S."/>
        </authorList>
    </citation>
    <scope>FUNCTION</scope>
    <scope>SUBCELLULAR LOCATION</scope>
    <scope>MUTAGENESIS OF TYR-619 AND HIS-624</scope>
</reference>
<reference key="6">
    <citation type="journal article" date="2003" name="Nature">
        <title>Global analysis of protein expression in yeast.</title>
        <authorList>
            <person name="Ghaemmaghami S."/>
            <person name="Huh W.-K."/>
            <person name="Bower K."/>
            <person name="Howson R.W."/>
            <person name="Belle A."/>
            <person name="Dephoure N."/>
            <person name="O'Shea E.K."/>
            <person name="Weissman J.S."/>
        </authorList>
    </citation>
    <scope>LEVEL OF PROTEIN EXPRESSION [LARGE SCALE ANALYSIS]</scope>
</reference>
<reference key="7">
    <citation type="journal article" date="2007" name="J. Proteome Res.">
        <title>Large-scale phosphorylation analysis of alpha-factor-arrested Saccharomyces cerevisiae.</title>
        <authorList>
            <person name="Li X."/>
            <person name="Gerber S.A."/>
            <person name="Rudner A.D."/>
            <person name="Beausoleil S.A."/>
            <person name="Haas W."/>
            <person name="Villen J."/>
            <person name="Elias J.E."/>
            <person name="Gygi S.P."/>
        </authorList>
    </citation>
    <scope>PHOSPHORYLATION [LARGE SCALE ANALYSIS] AT SER-364 AND SER-450</scope>
    <scope>IDENTIFICATION BY MASS SPECTROMETRY [LARGE SCALE ANALYSIS]</scope>
    <source>
        <strain>ADR376</strain>
    </source>
</reference>
<reference key="8">
    <citation type="journal article" date="2007" name="Proc. Natl. Acad. Sci. U.S.A.">
        <title>Analysis of phosphorylation sites on proteins from Saccharomyces cerevisiae by electron transfer dissociation (ETD) mass spectrometry.</title>
        <authorList>
            <person name="Chi A."/>
            <person name="Huttenhower C."/>
            <person name="Geer L.Y."/>
            <person name="Coon J.J."/>
            <person name="Syka J.E.P."/>
            <person name="Bai D.L."/>
            <person name="Shabanowitz J."/>
            <person name="Burke D.J."/>
            <person name="Troyanskaya O.G."/>
            <person name="Hunt D.F."/>
        </authorList>
    </citation>
    <scope>PHOSPHORYLATION [LARGE SCALE ANALYSIS] AT SER-364</scope>
    <scope>IDENTIFICATION BY MASS SPECTROMETRY [LARGE SCALE ANALYSIS]</scope>
</reference>
<reference key="9">
    <citation type="journal article" date="2008" name="Mol. Cell. Proteomics">
        <title>A multidimensional chromatography technology for in-depth phosphoproteome analysis.</title>
        <authorList>
            <person name="Albuquerque C.P."/>
            <person name="Smolka M.B."/>
            <person name="Payne S.H."/>
            <person name="Bafna V."/>
            <person name="Eng J."/>
            <person name="Zhou H."/>
        </authorList>
    </citation>
    <scope>IDENTIFICATION BY MASS SPECTROMETRY [LARGE SCALE ANALYSIS]</scope>
</reference>
<reference key="10">
    <citation type="journal article" date="2009" name="Science">
        <title>Global analysis of Cdk1 substrate phosphorylation sites provides insights into evolution.</title>
        <authorList>
            <person name="Holt L.J."/>
            <person name="Tuch B.B."/>
            <person name="Villen J."/>
            <person name="Johnson A.D."/>
            <person name="Gygi S.P."/>
            <person name="Morgan D.O."/>
        </authorList>
    </citation>
    <scope>PHOSPHORYLATION [LARGE SCALE ANALYSIS] AT SER-364; SER-450; SER-453 AND SER-555</scope>
    <scope>IDENTIFICATION BY MASS SPECTROMETRY [LARGE SCALE ANALYSIS]</scope>
</reference>
<sequence>MDTSVYSHALDIWAKADLTNLQRELDADVIEIKDKETLSLNSRKSLATETKKFKKLEPEEKLNNVNKIIKQYQREIDNLTQRSKFSEKVLFDVYEKLSEAPDPQPLLQSSLEKLGKIDDSKELKEKISYLEDKLAKYADYETLKSRLLDLEQSSAKTLAKRLTAKTQEINSTWEEKGRNWKEREADLLKQLTNVQEQNKALEAKISKNIDIEGNGNEDGDQENNQKEVSTRIAEYNLVTQELETTQARIYQLEKRNEELSGALAKATSEAEKETELHAKELKLNQLESENALLSASYEQERKSTSHAINELKEQLNSVVAESESYKSELETVRRKLNNYSDYNKIKEELSALKKIEFGVNEDDSDNDIRSEDKNDNTFESSLLSANKKLQATLAEYRSKSTAQEEERNELKKSVDQLKQQIATLKEANEKLETDLEKVENVSPHFNETASMMSGVTRQMNNRTSHKMSPTSSIIGIPEDGELSGNQSTILPIVTKQRDRFRSRNMDLEKQLRQGNSEKGKLKLEISKLKGDNTKLYERIRYLQSYNNNNAPVNQSTERIDVESQYSRVYDESLHPMANFRQNELNHYKNKKLSALEKLFSSFAKVILQNKMTRMVFLFYCIGLHGLVFMMSMYVINISGYMTPEVGIVQSAKSSSNLNGGLGGAEKVAAGVGSVHGINR</sequence>
<accession>P34237</accession>
<accession>D6VX22</accession>
<accession>P34236</accession>
<proteinExistence type="evidence at protein level"/>
<organism>
    <name type="scientific">Saccharomyces cerevisiae (strain ATCC 204508 / S288c)</name>
    <name type="common">Baker's yeast</name>
    <dbReference type="NCBI Taxonomy" id="559292"/>
    <lineage>
        <taxon>Eukaryota</taxon>
        <taxon>Fungi</taxon>
        <taxon>Dikarya</taxon>
        <taxon>Ascomycota</taxon>
        <taxon>Saccharomycotina</taxon>
        <taxon>Saccharomycetes</taxon>
        <taxon>Saccharomycetales</taxon>
        <taxon>Saccharomycetaceae</taxon>
        <taxon>Saccharomyces</taxon>
    </lineage>
</organism>
<gene>
    <name type="primary">COY1</name>
    <name type="ordered locus">YKL179C</name>
</gene>
<protein>
    <recommendedName>
        <fullName>Protein CASP</fullName>
    </recommendedName>
</protein>
<name>CASP_YEAST</name>
<keyword id="KW-0175">Coiled coil</keyword>
<keyword id="KW-0333">Golgi apparatus</keyword>
<keyword id="KW-0472">Membrane</keyword>
<keyword id="KW-0597">Phosphoprotein</keyword>
<keyword id="KW-1185">Reference proteome</keyword>
<keyword id="KW-0812">Transmembrane</keyword>
<keyword id="KW-1133">Transmembrane helix</keyword>
<keyword id="KW-0813">Transport</keyword>
<evidence type="ECO:0000255" key="1"/>
<evidence type="ECO:0000269" key="2">
    <source>
    </source>
</evidence>
<evidence type="ECO:0000269" key="3">
    <source>
    </source>
</evidence>
<evidence type="ECO:0000305" key="4"/>
<evidence type="ECO:0007744" key="5">
    <source>
    </source>
</evidence>
<evidence type="ECO:0007744" key="6">
    <source>
    </source>
</evidence>
<evidence type="ECO:0007744" key="7">
    <source>
    </source>
</evidence>
<dbReference type="EMBL" id="X74151">
    <property type="protein sequence ID" value="CAA52259.1"/>
    <property type="molecule type" value="Genomic_DNA"/>
</dbReference>
<dbReference type="EMBL" id="Z28179">
    <property type="protein sequence ID" value="CAA82021.1"/>
    <property type="molecule type" value="Genomic_DNA"/>
</dbReference>
<dbReference type="EMBL" id="BK006944">
    <property type="protein sequence ID" value="DAA08988.1"/>
    <property type="molecule type" value="Genomic_DNA"/>
</dbReference>
<dbReference type="PIR" id="S38011">
    <property type="entry name" value="S38011"/>
</dbReference>
<dbReference type="RefSeq" id="NP_012742.1">
    <property type="nucleotide sequence ID" value="NM_001179745.1"/>
</dbReference>
<dbReference type="SMR" id="P34237"/>
<dbReference type="BioGRID" id="33960">
    <property type="interactions" value="168"/>
</dbReference>
<dbReference type="DIP" id="DIP-2851N"/>
<dbReference type="FunCoup" id="P34237">
    <property type="interactions" value="320"/>
</dbReference>
<dbReference type="IntAct" id="P34237">
    <property type="interactions" value="5"/>
</dbReference>
<dbReference type="MINT" id="P34237"/>
<dbReference type="STRING" id="4932.YKL179C"/>
<dbReference type="iPTMnet" id="P34237"/>
<dbReference type="PaxDb" id="4932-YKL179C"/>
<dbReference type="PeptideAtlas" id="P34237"/>
<dbReference type="EnsemblFungi" id="YKL179C_mRNA">
    <property type="protein sequence ID" value="YKL179C"/>
    <property type="gene ID" value="YKL179C"/>
</dbReference>
<dbReference type="GeneID" id="853675"/>
<dbReference type="KEGG" id="sce:YKL179C"/>
<dbReference type="AGR" id="SGD:S000001662"/>
<dbReference type="SGD" id="S000001662">
    <property type="gene designation" value="COY1"/>
</dbReference>
<dbReference type="VEuPathDB" id="FungiDB:YKL179C"/>
<dbReference type="eggNOG" id="KOG0963">
    <property type="taxonomic scope" value="Eukaryota"/>
</dbReference>
<dbReference type="GeneTree" id="ENSGT00940000172657"/>
<dbReference type="HOGENOM" id="CLU_016758_0_0_1"/>
<dbReference type="InParanoid" id="P34237"/>
<dbReference type="OMA" id="WQQEGFN"/>
<dbReference type="OrthoDB" id="10257567at2759"/>
<dbReference type="BioCyc" id="YEAST:G3O-31945-MONOMER"/>
<dbReference type="BioGRID-ORCS" id="853675">
    <property type="hits" value="0 hits in 10 CRISPR screens"/>
</dbReference>
<dbReference type="PRO" id="PR:P34237"/>
<dbReference type="Proteomes" id="UP000002311">
    <property type="component" value="Chromosome XI"/>
</dbReference>
<dbReference type="RNAct" id="P34237">
    <property type="molecule type" value="protein"/>
</dbReference>
<dbReference type="GO" id="GO:0000139">
    <property type="term" value="C:Golgi membrane"/>
    <property type="evidence" value="ECO:0000314"/>
    <property type="project" value="SGD"/>
</dbReference>
<dbReference type="GO" id="GO:0000149">
    <property type="term" value="F:SNARE binding"/>
    <property type="evidence" value="ECO:0000314"/>
    <property type="project" value="SGD"/>
</dbReference>
<dbReference type="GO" id="GO:0048211">
    <property type="term" value="P:Golgi vesicle docking"/>
    <property type="evidence" value="ECO:0000314"/>
    <property type="project" value="SGD"/>
</dbReference>
<dbReference type="GO" id="GO:0048193">
    <property type="term" value="P:Golgi vesicle transport"/>
    <property type="evidence" value="ECO:0000316"/>
    <property type="project" value="SGD"/>
</dbReference>
<dbReference type="GO" id="GO:0006891">
    <property type="term" value="P:intra-Golgi vesicle-mediated transport"/>
    <property type="evidence" value="ECO:0007669"/>
    <property type="project" value="InterPro"/>
</dbReference>
<dbReference type="InterPro" id="IPR012955">
    <property type="entry name" value="CASP_C"/>
</dbReference>
<dbReference type="PANTHER" id="PTHR14043">
    <property type="entry name" value="CCAAT DISPLACEMENT PROTEIN-RELATED"/>
    <property type="match status" value="1"/>
</dbReference>
<dbReference type="PANTHER" id="PTHR14043:SF2">
    <property type="entry name" value="HOMEOBOX PROTEIN CUT"/>
    <property type="match status" value="1"/>
</dbReference>
<dbReference type="Pfam" id="PF08172">
    <property type="entry name" value="CASP_C"/>
    <property type="match status" value="1"/>
</dbReference>
<dbReference type="Pfam" id="PF25398">
    <property type="entry name" value="CUX1_N"/>
    <property type="match status" value="1"/>
</dbReference>